<evidence type="ECO:0000255" key="1">
    <source>
        <dbReference type="HAMAP-Rule" id="MF_00011"/>
    </source>
</evidence>
<organism>
    <name type="scientific">Acidovorax sp. (strain JS42)</name>
    <dbReference type="NCBI Taxonomy" id="232721"/>
    <lineage>
        <taxon>Bacteria</taxon>
        <taxon>Pseudomonadati</taxon>
        <taxon>Pseudomonadota</taxon>
        <taxon>Betaproteobacteria</taxon>
        <taxon>Burkholderiales</taxon>
        <taxon>Comamonadaceae</taxon>
        <taxon>Acidovorax</taxon>
    </lineage>
</organism>
<name>PURA_ACISJ</name>
<sequence>MKASKGRNVVVVGTQWGDEGKGKLVDWLTESAQGVVRFQGGHNAGHTLVINGVKTALHLIPSGIMRPGVKCYIGNGVVLSAGKLFEEIEGLEKAGVEVRSRLRVSEACPLILPFHAALDVAREAAREHGGAEKIGTTGRGIGPAYEDKIARRALRVQDLKYPERFAAKLRELLALHNHVLSTFLGSANFQFGDALKPYITGGQVQFEPVFEEAMRHAEMLKPMMADVSRELNEAHAAGANLLFEGAQGTLLDVDHGTYPYVTSSNCVAGNAAAGSGVGPGHLHYILGITKAYCTRVGGGPFPTELDWETPGTPGYHMSTVGAEKGVTTGRSRRCGWFDAALLKRSAQVNGLSGLCITKLDVLDGLRELSLCVGYELDGERIDLLPMGAEEIARCVPIYENIAGWTESTVGVTHYENLPSNARRYLERIEQVTGVPIAMISTSPDRDHTILMRHPYAAD</sequence>
<comment type="function">
    <text evidence="1">Plays an important role in the de novo pathway of purine nucleotide biosynthesis. Catalyzes the first committed step in the biosynthesis of AMP from IMP.</text>
</comment>
<comment type="catalytic activity">
    <reaction evidence="1">
        <text>IMP + L-aspartate + GTP = N(6)-(1,2-dicarboxyethyl)-AMP + GDP + phosphate + 2 H(+)</text>
        <dbReference type="Rhea" id="RHEA:15753"/>
        <dbReference type="ChEBI" id="CHEBI:15378"/>
        <dbReference type="ChEBI" id="CHEBI:29991"/>
        <dbReference type="ChEBI" id="CHEBI:37565"/>
        <dbReference type="ChEBI" id="CHEBI:43474"/>
        <dbReference type="ChEBI" id="CHEBI:57567"/>
        <dbReference type="ChEBI" id="CHEBI:58053"/>
        <dbReference type="ChEBI" id="CHEBI:58189"/>
        <dbReference type="EC" id="6.3.4.4"/>
    </reaction>
</comment>
<comment type="cofactor">
    <cofactor evidence="1">
        <name>Mg(2+)</name>
        <dbReference type="ChEBI" id="CHEBI:18420"/>
    </cofactor>
    <text evidence="1">Binds 1 Mg(2+) ion per subunit.</text>
</comment>
<comment type="pathway">
    <text evidence="1">Purine metabolism; AMP biosynthesis via de novo pathway; AMP from IMP: step 1/2.</text>
</comment>
<comment type="subunit">
    <text evidence="1">Homodimer.</text>
</comment>
<comment type="subcellular location">
    <subcellularLocation>
        <location evidence="1">Cytoplasm</location>
    </subcellularLocation>
</comment>
<comment type="similarity">
    <text evidence="1">Belongs to the adenylosuccinate synthetase family.</text>
</comment>
<proteinExistence type="inferred from homology"/>
<keyword id="KW-0963">Cytoplasm</keyword>
<keyword id="KW-0342">GTP-binding</keyword>
<keyword id="KW-0436">Ligase</keyword>
<keyword id="KW-0460">Magnesium</keyword>
<keyword id="KW-0479">Metal-binding</keyword>
<keyword id="KW-0547">Nucleotide-binding</keyword>
<keyword id="KW-0658">Purine biosynthesis</keyword>
<reference key="1">
    <citation type="submission" date="2006-12" db="EMBL/GenBank/DDBJ databases">
        <title>Complete sequence of chromosome 1 of Acidovorax sp. JS42.</title>
        <authorList>
            <person name="Copeland A."/>
            <person name="Lucas S."/>
            <person name="Lapidus A."/>
            <person name="Barry K."/>
            <person name="Detter J.C."/>
            <person name="Glavina del Rio T."/>
            <person name="Dalin E."/>
            <person name="Tice H."/>
            <person name="Pitluck S."/>
            <person name="Chertkov O."/>
            <person name="Brettin T."/>
            <person name="Bruce D."/>
            <person name="Han C."/>
            <person name="Tapia R."/>
            <person name="Gilna P."/>
            <person name="Schmutz J."/>
            <person name="Larimer F."/>
            <person name="Land M."/>
            <person name="Hauser L."/>
            <person name="Kyrpides N."/>
            <person name="Kim E."/>
            <person name="Stahl D."/>
            <person name="Richardson P."/>
        </authorList>
    </citation>
    <scope>NUCLEOTIDE SEQUENCE [LARGE SCALE GENOMIC DNA]</scope>
    <source>
        <strain>JS42</strain>
    </source>
</reference>
<protein>
    <recommendedName>
        <fullName evidence="1">Adenylosuccinate synthetase</fullName>
        <shortName evidence="1">AMPSase</shortName>
        <shortName evidence="1">AdSS</shortName>
        <ecNumber evidence="1">6.3.4.4</ecNumber>
    </recommendedName>
    <alternativeName>
        <fullName evidence="1">IMP--aspartate ligase</fullName>
    </alternativeName>
</protein>
<accession>A1W588</accession>
<dbReference type="EC" id="6.3.4.4" evidence="1"/>
<dbReference type="EMBL" id="CP000539">
    <property type="protein sequence ID" value="ABM41413.1"/>
    <property type="molecule type" value="Genomic_DNA"/>
</dbReference>
<dbReference type="SMR" id="A1W588"/>
<dbReference type="STRING" id="232721.Ajs_1181"/>
<dbReference type="KEGG" id="ajs:Ajs_1181"/>
<dbReference type="eggNOG" id="COG0104">
    <property type="taxonomic scope" value="Bacteria"/>
</dbReference>
<dbReference type="HOGENOM" id="CLU_029848_0_0_4"/>
<dbReference type="UniPathway" id="UPA00075">
    <property type="reaction ID" value="UER00335"/>
</dbReference>
<dbReference type="Proteomes" id="UP000000645">
    <property type="component" value="Chromosome"/>
</dbReference>
<dbReference type="GO" id="GO:0005737">
    <property type="term" value="C:cytoplasm"/>
    <property type="evidence" value="ECO:0007669"/>
    <property type="project" value="UniProtKB-SubCell"/>
</dbReference>
<dbReference type="GO" id="GO:0004019">
    <property type="term" value="F:adenylosuccinate synthase activity"/>
    <property type="evidence" value="ECO:0007669"/>
    <property type="project" value="UniProtKB-UniRule"/>
</dbReference>
<dbReference type="GO" id="GO:0005525">
    <property type="term" value="F:GTP binding"/>
    <property type="evidence" value="ECO:0007669"/>
    <property type="project" value="UniProtKB-UniRule"/>
</dbReference>
<dbReference type="GO" id="GO:0000287">
    <property type="term" value="F:magnesium ion binding"/>
    <property type="evidence" value="ECO:0007669"/>
    <property type="project" value="UniProtKB-UniRule"/>
</dbReference>
<dbReference type="GO" id="GO:0044208">
    <property type="term" value="P:'de novo' AMP biosynthetic process"/>
    <property type="evidence" value="ECO:0007669"/>
    <property type="project" value="UniProtKB-UniRule"/>
</dbReference>
<dbReference type="GO" id="GO:0046040">
    <property type="term" value="P:IMP metabolic process"/>
    <property type="evidence" value="ECO:0007669"/>
    <property type="project" value="TreeGrafter"/>
</dbReference>
<dbReference type="CDD" id="cd03108">
    <property type="entry name" value="AdSS"/>
    <property type="match status" value="1"/>
</dbReference>
<dbReference type="FunFam" id="1.10.300.10:FF:000001">
    <property type="entry name" value="Adenylosuccinate synthetase"/>
    <property type="match status" value="1"/>
</dbReference>
<dbReference type="FunFam" id="3.90.170.10:FF:000001">
    <property type="entry name" value="Adenylosuccinate synthetase"/>
    <property type="match status" value="1"/>
</dbReference>
<dbReference type="Gene3D" id="3.40.440.10">
    <property type="entry name" value="Adenylosuccinate Synthetase, subunit A, domain 1"/>
    <property type="match status" value="1"/>
</dbReference>
<dbReference type="Gene3D" id="1.10.300.10">
    <property type="entry name" value="Adenylosuccinate Synthetase, subunit A, domain 2"/>
    <property type="match status" value="1"/>
</dbReference>
<dbReference type="Gene3D" id="3.90.170.10">
    <property type="entry name" value="Adenylosuccinate Synthetase, subunit A, domain 3"/>
    <property type="match status" value="1"/>
</dbReference>
<dbReference type="HAMAP" id="MF_00011">
    <property type="entry name" value="Adenylosucc_synth"/>
    <property type="match status" value="1"/>
</dbReference>
<dbReference type="InterPro" id="IPR018220">
    <property type="entry name" value="Adenylosuccin_syn_GTP-bd"/>
</dbReference>
<dbReference type="InterPro" id="IPR033128">
    <property type="entry name" value="Adenylosuccin_syn_Lys_AS"/>
</dbReference>
<dbReference type="InterPro" id="IPR042109">
    <property type="entry name" value="Adenylosuccinate_synth_dom1"/>
</dbReference>
<dbReference type="InterPro" id="IPR042110">
    <property type="entry name" value="Adenylosuccinate_synth_dom2"/>
</dbReference>
<dbReference type="InterPro" id="IPR042111">
    <property type="entry name" value="Adenylosuccinate_synth_dom3"/>
</dbReference>
<dbReference type="InterPro" id="IPR001114">
    <property type="entry name" value="Adenylosuccinate_synthetase"/>
</dbReference>
<dbReference type="InterPro" id="IPR027417">
    <property type="entry name" value="P-loop_NTPase"/>
</dbReference>
<dbReference type="NCBIfam" id="NF002223">
    <property type="entry name" value="PRK01117.1"/>
    <property type="match status" value="1"/>
</dbReference>
<dbReference type="NCBIfam" id="TIGR00184">
    <property type="entry name" value="purA"/>
    <property type="match status" value="1"/>
</dbReference>
<dbReference type="PANTHER" id="PTHR11846">
    <property type="entry name" value="ADENYLOSUCCINATE SYNTHETASE"/>
    <property type="match status" value="1"/>
</dbReference>
<dbReference type="PANTHER" id="PTHR11846:SF0">
    <property type="entry name" value="ADENYLOSUCCINATE SYNTHETASE"/>
    <property type="match status" value="1"/>
</dbReference>
<dbReference type="Pfam" id="PF00709">
    <property type="entry name" value="Adenylsucc_synt"/>
    <property type="match status" value="1"/>
</dbReference>
<dbReference type="SMART" id="SM00788">
    <property type="entry name" value="Adenylsucc_synt"/>
    <property type="match status" value="1"/>
</dbReference>
<dbReference type="SUPFAM" id="SSF52540">
    <property type="entry name" value="P-loop containing nucleoside triphosphate hydrolases"/>
    <property type="match status" value="1"/>
</dbReference>
<dbReference type="PROSITE" id="PS01266">
    <property type="entry name" value="ADENYLOSUCCIN_SYN_1"/>
    <property type="match status" value="1"/>
</dbReference>
<dbReference type="PROSITE" id="PS00513">
    <property type="entry name" value="ADENYLOSUCCIN_SYN_2"/>
    <property type="match status" value="1"/>
</dbReference>
<gene>
    <name evidence="1" type="primary">purA</name>
    <name type="ordered locus">Ajs_1181</name>
</gene>
<feature type="chain" id="PRO_0000321791" description="Adenylosuccinate synthetase">
    <location>
        <begin position="1"/>
        <end position="458"/>
    </location>
</feature>
<feature type="active site" description="Proton acceptor" evidence="1">
    <location>
        <position position="18"/>
    </location>
</feature>
<feature type="active site" description="Proton donor" evidence="1">
    <location>
        <position position="46"/>
    </location>
</feature>
<feature type="binding site" evidence="1">
    <location>
        <begin position="17"/>
        <end position="23"/>
    </location>
    <ligand>
        <name>GTP</name>
        <dbReference type="ChEBI" id="CHEBI:37565"/>
    </ligand>
</feature>
<feature type="binding site" description="in other chain" evidence="1">
    <location>
        <begin position="18"/>
        <end position="21"/>
    </location>
    <ligand>
        <name>IMP</name>
        <dbReference type="ChEBI" id="CHEBI:58053"/>
        <note>ligand shared between dimeric partners</note>
    </ligand>
</feature>
<feature type="binding site" evidence="1">
    <location>
        <position position="18"/>
    </location>
    <ligand>
        <name>Mg(2+)</name>
        <dbReference type="ChEBI" id="CHEBI:18420"/>
    </ligand>
</feature>
<feature type="binding site" description="in other chain" evidence="1">
    <location>
        <begin position="43"/>
        <end position="46"/>
    </location>
    <ligand>
        <name>IMP</name>
        <dbReference type="ChEBI" id="CHEBI:58053"/>
        <note>ligand shared between dimeric partners</note>
    </ligand>
</feature>
<feature type="binding site" evidence="1">
    <location>
        <begin position="45"/>
        <end position="47"/>
    </location>
    <ligand>
        <name>GTP</name>
        <dbReference type="ChEBI" id="CHEBI:37565"/>
    </ligand>
</feature>
<feature type="binding site" evidence="1">
    <location>
        <position position="45"/>
    </location>
    <ligand>
        <name>Mg(2+)</name>
        <dbReference type="ChEBI" id="CHEBI:18420"/>
    </ligand>
</feature>
<feature type="binding site" description="in other chain" evidence="1">
    <location>
        <position position="137"/>
    </location>
    <ligand>
        <name>IMP</name>
        <dbReference type="ChEBI" id="CHEBI:58053"/>
        <note>ligand shared between dimeric partners</note>
    </ligand>
</feature>
<feature type="binding site" evidence="1">
    <location>
        <position position="151"/>
    </location>
    <ligand>
        <name>IMP</name>
        <dbReference type="ChEBI" id="CHEBI:58053"/>
        <note>ligand shared between dimeric partners</note>
    </ligand>
</feature>
<feature type="binding site" description="in other chain" evidence="1">
    <location>
        <position position="247"/>
    </location>
    <ligand>
        <name>IMP</name>
        <dbReference type="ChEBI" id="CHEBI:58053"/>
        <note>ligand shared between dimeric partners</note>
    </ligand>
</feature>
<feature type="binding site" description="in other chain" evidence="1">
    <location>
        <position position="262"/>
    </location>
    <ligand>
        <name>IMP</name>
        <dbReference type="ChEBI" id="CHEBI:58053"/>
        <note>ligand shared between dimeric partners</note>
    </ligand>
</feature>
<feature type="binding site" evidence="1">
    <location>
        <begin position="326"/>
        <end position="332"/>
    </location>
    <ligand>
        <name>substrate</name>
    </ligand>
</feature>
<feature type="binding site" description="in other chain" evidence="1">
    <location>
        <position position="330"/>
    </location>
    <ligand>
        <name>IMP</name>
        <dbReference type="ChEBI" id="CHEBI:58053"/>
        <note>ligand shared between dimeric partners</note>
    </ligand>
</feature>
<feature type="binding site" evidence="1">
    <location>
        <position position="332"/>
    </location>
    <ligand>
        <name>GTP</name>
        <dbReference type="ChEBI" id="CHEBI:37565"/>
    </ligand>
</feature>
<feature type="binding site" evidence="1">
    <location>
        <begin position="358"/>
        <end position="360"/>
    </location>
    <ligand>
        <name>GTP</name>
        <dbReference type="ChEBI" id="CHEBI:37565"/>
    </ligand>
</feature>
<feature type="binding site" evidence="1">
    <location>
        <begin position="440"/>
        <end position="442"/>
    </location>
    <ligand>
        <name>GTP</name>
        <dbReference type="ChEBI" id="CHEBI:37565"/>
    </ligand>
</feature>